<sequence>MDDSLGVSEVVMIPFMKREVLQQICAILDTDNTWETIAPYMPGIELRDVEGCKRYSSYNQSPSELLLRIWSSKGYSTTHLYQLFAKTKLIRLMRMMRSQVHEKYHYLENKVTNSTSRVSKQMVQPPGSQSASRLKKTEIKESSPSPAAAAASQLSRSNTDDTLRVAIEGTLPVTYCELLEATNGFAVSNVIGKGGYGTVYKGELKGTGGIVAVKRLHSGNDTSQNGSRERLRQSLTELRTLARFRHDNILPIYAYSLEGSEPCLVYQFMSNGSLEDRLLCRKGSVPLTWIQRKEISIGAGRGLGFLHSFGKTPIIHGDIKTANILLDKHMEPKIGDFGLCRDGHVEAEAMEKHPLIASHIKGTLAYLAPEFITSKILTTKLDVYSFGIVLLEIASGQRAYSDSRETRGLVEYCQVNKELAAHRKIPVREIFIDRRAPPLVGDEEKSFLDALIEVGLAGANNDRKVRPTMSQIVEYLCKNSIPPVV</sequence>
<keyword id="KW-0025">Alternative splicing</keyword>
<keyword id="KW-0067">ATP-binding</keyword>
<keyword id="KW-0418">Kinase</keyword>
<keyword id="KW-0547">Nucleotide-binding</keyword>
<keyword id="KW-1185">Reference proteome</keyword>
<keyword id="KW-0723">Serine/threonine-protein kinase</keyword>
<keyword id="KW-0808">Transferase</keyword>
<protein>
    <recommendedName>
        <fullName evidence="5">Pelle-like serine/threonine-protein kinase pik-1</fullName>
        <ecNumber evidence="1">2.7.11.1</ecNumber>
    </recommendedName>
</protein>
<accession>G5ECP4</accession>
<accession>F5GUH7</accession>
<dbReference type="EC" id="2.7.11.1" evidence="1"/>
<dbReference type="EMBL" id="AF348167">
    <property type="protein sequence ID" value="AAK37545.1"/>
    <property type="molecule type" value="mRNA"/>
</dbReference>
<dbReference type="EMBL" id="BX284604">
    <property type="protein sequence ID" value="CAB05550.2"/>
    <property type="molecule type" value="Genomic_DNA"/>
</dbReference>
<dbReference type="EMBL" id="BX284604">
    <property type="protein sequence ID" value="CCA65582.1"/>
    <property type="molecule type" value="Genomic_DNA"/>
</dbReference>
<dbReference type="PIR" id="T23534">
    <property type="entry name" value="T23534"/>
</dbReference>
<dbReference type="RefSeq" id="NP_001255742.1">
    <molecule id="G5ECP4-1"/>
    <property type="nucleotide sequence ID" value="NM_001268813.5"/>
</dbReference>
<dbReference type="RefSeq" id="NP_001255743.1">
    <molecule id="G5ECP4-2"/>
    <property type="nucleotide sequence ID" value="NM_001268814.3"/>
</dbReference>
<dbReference type="SMR" id="G5ECP4"/>
<dbReference type="FunCoup" id="G5ECP4">
    <property type="interactions" value="3129"/>
</dbReference>
<dbReference type="IntAct" id="G5ECP4">
    <property type="interactions" value="3"/>
</dbReference>
<dbReference type="STRING" id="6239.K09B11.1a.2"/>
<dbReference type="PaxDb" id="6239-K09B11.1a"/>
<dbReference type="EnsemblMetazoa" id="K09B11.1a.1">
    <molecule id="G5ECP4-1"/>
    <property type="protein sequence ID" value="K09B11.1a.1"/>
    <property type="gene ID" value="WBGene00004029"/>
</dbReference>
<dbReference type="EnsemblMetazoa" id="K09B11.1a.2">
    <molecule id="G5ECP4-1"/>
    <property type="protein sequence ID" value="K09B11.1a.2"/>
    <property type="gene ID" value="WBGene00004029"/>
</dbReference>
<dbReference type="EnsemblMetazoa" id="K09B11.1b.1">
    <molecule id="G5ECP4-2"/>
    <property type="protein sequence ID" value="K09B11.1b.1"/>
    <property type="gene ID" value="WBGene00004029"/>
</dbReference>
<dbReference type="GeneID" id="178306"/>
<dbReference type="KEGG" id="cel:CELE_K09B11.1"/>
<dbReference type="AGR" id="WB:WBGene00004029"/>
<dbReference type="CTD" id="178306"/>
<dbReference type="WormBase" id="K09B11.1a">
    <molecule id="G5ECP4-1"/>
    <property type="protein sequence ID" value="CE31033"/>
    <property type="gene ID" value="WBGene00004029"/>
    <property type="gene designation" value="pik-1"/>
</dbReference>
<dbReference type="WormBase" id="K09B11.1b">
    <molecule id="G5ECP4-2"/>
    <property type="protein sequence ID" value="CE45959"/>
    <property type="gene ID" value="WBGene00004029"/>
    <property type="gene designation" value="pik-1"/>
</dbReference>
<dbReference type="eggNOG" id="KOG1187">
    <property type="taxonomic scope" value="Eukaryota"/>
</dbReference>
<dbReference type="GeneTree" id="ENSGT00940000169271"/>
<dbReference type="HOGENOM" id="CLU_000288_21_15_1"/>
<dbReference type="InParanoid" id="G5ECP4"/>
<dbReference type="OMA" id="MVRCMRI"/>
<dbReference type="OrthoDB" id="4062651at2759"/>
<dbReference type="PhylomeDB" id="G5ECP4"/>
<dbReference type="Reactome" id="R-CEL-9020702">
    <property type="pathway name" value="Interleukin-1 signaling"/>
</dbReference>
<dbReference type="SignaLink" id="G5ECP4"/>
<dbReference type="PRO" id="PR:G5ECP4"/>
<dbReference type="Proteomes" id="UP000001940">
    <property type="component" value="Chromosome IV"/>
</dbReference>
<dbReference type="Bgee" id="WBGene00004029">
    <property type="expression patterns" value="Expressed in embryo and 3 other cell types or tissues"/>
</dbReference>
<dbReference type="GO" id="GO:0005737">
    <property type="term" value="C:cytoplasm"/>
    <property type="evidence" value="ECO:0000318"/>
    <property type="project" value="GO_Central"/>
</dbReference>
<dbReference type="GO" id="GO:0005634">
    <property type="term" value="C:nucleus"/>
    <property type="evidence" value="ECO:0000318"/>
    <property type="project" value="GO_Central"/>
</dbReference>
<dbReference type="GO" id="GO:0005886">
    <property type="term" value="C:plasma membrane"/>
    <property type="evidence" value="ECO:0000318"/>
    <property type="project" value="GO_Central"/>
</dbReference>
<dbReference type="GO" id="GO:0005524">
    <property type="term" value="F:ATP binding"/>
    <property type="evidence" value="ECO:0007669"/>
    <property type="project" value="UniProtKB-KW"/>
</dbReference>
<dbReference type="GO" id="GO:0106310">
    <property type="term" value="F:protein serine kinase activity"/>
    <property type="evidence" value="ECO:0007669"/>
    <property type="project" value="RHEA"/>
</dbReference>
<dbReference type="GO" id="GO:0004674">
    <property type="term" value="F:protein serine/threonine kinase activity"/>
    <property type="evidence" value="ECO:0007669"/>
    <property type="project" value="UniProtKB-KW"/>
</dbReference>
<dbReference type="GO" id="GO:0019221">
    <property type="term" value="P:cytokine-mediated signaling pathway"/>
    <property type="evidence" value="ECO:0000318"/>
    <property type="project" value="GO_Central"/>
</dbReference>
<dbReference type="GO" id="GO:0045087">
    <property type="term" value="P:innate immune response"/>
    <property type="evidence" value="ECO:0007669"/>
    <property type="project" value="UniProtKB-ARBA"/>
</dbReference>
<dbReference type="GO" id="GO:0035556">
    <property type="term" value="P:intracellular signal transduction"/>
    <property type="evidence" value="ECO:0000318"/>
    <property type="project" value="GO_Central"/>
</dbReference>
<dbReference type="GO" id="GO:0031663">
    <property type="term" value="P:lipopolysaccharide-mediated signaling pathway"/>
    <property type="evidence" value="ECO:0000318"/>
    <property type="project" value="GO_Central"/>
</dbReference>
<dbReference type="GO" id="GO:0008063">
    <property type="term" value="P:Toll signaling pathway"/>
    <property type="evidence" value="ECO:0000318"/>
    <property type="project" value="GO_Central"/>
</dbReference>
<dbReference type="CDD" id="cd08307">
    <property type="entry name" value="Death_Pelle"/>
    <property type="match status" value="1"/>
</dbReference>
<dbReference type="CDD" id="cd14066">
    <property type="entry name" value="STKc_IRAK"/>
    <property type="match status" value="1"/>
</dbReference>
<dbReference type="FunFam" id="1.10.510.10:FF:000754">
    <property type="entry name" value="Interleukin-1 receptor-associated kinase"/>
    <property type="match status" value="1"/>
</dbReference>
<dbReference type="FunFam" id="1.10.533.10:FF:000094">
    <property type="entry name" value="Interleukin-1 receptor-associated kinase"/>
    <property type="match status" value="1"/>
</dbReference>
<dbReference type="Gene3D" id="1.10.533.10">
    <property type="entry name" value="Death Domain, Fas"/>
    <property type="match status" value="1"/>
</dbReference>
<dbReference type="Gene3D" id="3.30.200.20">
    <property type="entry name" value="Phosphorylase Kinase, domain 1"/>
    <property type="match status" value="1"/>
</dbReference>
<dbReference type="Gene3D" id="1.10.510.10">
    <property type="entry name" value="Transferase(Phosphotransferase) domain 1"/>
    <property type="match status" value="1"/>
</dbReference>
<dbReference type="InterPro" id="IPR011029">
    <property type="entry name" value="DEATH-like_dom_sf"/>
</dbReference>
<dbReference type="InterPro" id="IPR000488">
    <property type="entry name" value="Death_dom"/>
</dbReference>
<dbReference type="InterPro" id="IPR011009">
    <property type="entry name" value="Kinase-like_dom_sf"/>
</dbReference>
<dbReference type="InterPro" id="IPR051824">
    <property type="entry name" value="LRR_Rcpt-Like_S/T_Kinase"/>
</dbReference>
<dbReference type="InterPro" id="IPR037924">
    <property type="entry name" value="Pelle_death"/>
</dbReference>
<dbReference type="InterPro" id="IPR000719">
    <property type="entry name" value="Prot_kinase_dom"/>
</dbReference>
<dbReference type="InterPro" id="IPR017441">
    <property type="entry name" value="Protein_kinase_ATP_BS"/>
</dbReference>
<dbReference type="InterPro" id="IPR008271">
    <property type="entry name" value="Ser/Thr_kinase_AS"/>
</dbReference>
<dbReference type="PANTHER" id="PTHR48006">
    <property type="entry name" value="LEUCINE-RICH REPEAT-CONTAINING PROTEIN DDB_G0281931-RELATED"/>
    <property type="match status" value="1"/>
</dbReference>
<dbReference type="PANTHER" id="PTHR48006:SF102">
    <property type="entry name" value="LEUCINE-RICH REPEAT-CONTAINING PROTEIN DDB_G0281931-RELATED"/>
    <property type="match status" value="1"/>
</dbReference>
<dbReference type="Pfam" id="PF00531">
    <property type="entry name" value="Death"/>
    <property type="match status" value="1"/>
</dbReference>
<dbReference type="Pfam" id="PF00069">
    <property type="entry name" value="Pkinase"/>
    <property type="match status" value="1"/>
</dbReference>
<dbReference type="SMART" id="SM00220">
    <property type="entry name" value="S_TKc"/>
    <property type="match status" value="1"/>
</dbReference>
<dbReference type="SUPFAM" id="SSF47986">
    <property type="entry name" value="DEATH domain"/>
    <property type="match status" value="1"/>
</dbReference>
<dbReference type="SUPFAM" id="SSF56112">
    <property type="entry name" value="Protein kinase-like (PK-like)"/>
    <property type="match status" value="1"/>
</dbReference>
<dbReference type="PROSITE" id="PS00107">
    <property type="entry name" value="PROTEIN_KINASE_ATP"/>
    <property type="match status" value="1"/>
</dbReference>
<dbReference type="PROSITE" id="PS50011">
    <property type="entry name" value="PROTEIN_KINASE_DOM"/>
    <property type="match status" value="1"/>
</dbReference>
<dbReference type="PROSITE" id="PS00108">
    <property type="entry name" value="PROTEIN_KINASE_ST"/>
    <property type="match status" value="1"/>
</dbReference>
<proteinExistence type="evidence at protein level"/>
<organism evidence="6">
    <name type="scientific">Caenorhabditis elegans</name>
    <dbReference type="NCBI Taxonomy" id="6239"/>
    <lineage>
        <taxon>Eukaryota</taxon>
        <taxon>Metazoa</taxon>
        <taxon>Ecdysozoa</taxon>
        <taxon>Nematoda</taxon>
        <taxon>Chromadorea</taxon>
        <taxon>Rhabditida</taxon>
        <taxon>Rhabditina</taxon>
        <taxon>Rhabditomorpha</taxon>
        <taxon>Rhabditoidea</taxon>
        <taxon>Rhabditidae</taxon>
        <taxon>Peloderinae</taxon>
        <taxon>Caenorhabditis</taxon>
    </lineage>
</organism>
<reference evidence="5" key="1">
    <citation type="journal article" date="2001" name="Curr. Biol.">
        <title>A reverse genetic analysis of components of the Toll signaling pathway in Caenorhabditis elegans.</title>
        <authorList>
            <person name="Pujol N."/>
            <person name="Link E.M."/>
            <person name="Liu L.X."/>
            <person name="Kurz C.L."/>
            <person name="Alloing G."/>
            <person name="Tan M.W."/>
            <person name="Ray K.P."/>
            <person name="Solari R."/>
            <person name="Johnson C.D."/>
            <person name="Ewbank J.J."/>
        </authorList>
    </citation>
    <scope>NUCLEOTIDE SEQUENCE [MRNA] (ISOFORM A)</scope>
</reference>
<reference evidence="6" key="2">
    <citation type="journal article" date="1998" name="Science">
        <title>Genome sequence of the nematode C. elegans: a platform for investigating biology.</title>
        <authorList>
            <consortium name="The C. elegans sequencing consortium"/>
        </authorList>
    </citation>
    <scope>NUCLEOTIDE SEQUENCE [LARGE SCALE GENOMIC DNA]</scope>
    <source>
        <strain evidence="6">Bristol N2</strain>
    </source>
</reference>
<reference evidence="5" key="3">
    <citation type="journal article" date="2017" name="Nature">
        <title>IL-17 is a neuromodulator of Caenorhabditis elegans sensory responses.</title>
        <authorList>
            <person name="Chen C."/>
            <person name="Itakura E."/>
            <person name="Nelson G.M."/>
            <person name="Sheng M."/>
            <person name="Laurent P."/>
            <person name="Fenk L.A."/>
            <person name="Butcher R.A."/>
            <person name="Hegde R.S."/>
            <person name="de Bono M."/>
        </authorList>
    </citation>
    <scope>FUNCTION</scope>
    <scope>INTERACTION WITH ACTL-1</scope>
    <scope>TISSUE SPECIFICITY</scope>
</reference>
<name>PIK1_CAEEL</name>
<feature type="chain" id="PRO_0000445233" description="Pelle-like serine/threonine-protein kinase pik-1" evidence="5">
    <location>
        <begin position="1"/>
        <end position="485"/>
    </location>
</feature>
<feature type="domain" description="Protein kinase" evidence="2">
    <location>
        <begin position="185"/>
        <end position="485"/>
    </location>
</feature>
<feature type="region of interest" description="Disordered" evidence="3">
    <location>
        <begin position="115"/>
        <end position="155"/>
    </location>
</feature>
<feature type="compositionally biased region" description="Polar residues" evidence="3">
    <location>
        <begin position="115"/>
        <end position="132"/>
    </location>
</feature>
<feature type="compositionally biased region" description="Low complexity" evidence="3">
    <location>
        <begin position="142"/>
        <end position="152"/>
    </location>
</feature>
<feature type="active site" description="Proton acceptor" evidence="2">
    <location>
        <position position="318"/>
    </location>
</feature>
<feature type="binding site" evidence="2">
    <location>
        <begin position="191"/>
        <end position="199"/>
    </location>
    <ligand>
        <name>ATP</name>
        <dbReference type="ChEBI" id="CHEBI:30616"/>
    </ligand>
</feature>
<feature type="binding site" evidence="2">
    <location>
        <position position="214"/>
    </location>
    <ligand>
        <name>ATP</name>
        <dbReference type="ChEBI" id="CHEBI:30616"/>
    </ligand>
</feature>
<feature type="splice variant" id="VSP_059828" description="In isoform b." evidence="5">
    <location>
        <begin position="1"/>
        <end position="40"/>
    </location>
</feature>
<comment type="function">
    <text evidence="4">Through association with the adapter actl-1, may act downstream of the receptor complex composed of ilcr-1 and ilcr-2, which is a signaling complex that modulates neuronal activity and animal behavior in response to sensory neuron input.</text>
</comment>
<comment type="catalytic activity">
    <reaction evidence="1">
        <text>L-seryl-[protein] + ATP = O-phospho-L-seryl-[protein] + ADP + H(+)</text>
        <dbReference type="Rhea" id="RHEA:17989"/>
        <dbReference type="Rhea" id="RHEA-COMP:9863"/>
        <dbReference type="Rhea" id="RHEA-COMP:11604"/>
        <dbReference type="ChEBI" id="CHEBI:15378"/>
        <dbReference type="ChEBI" id="CHEBI:29999"/>
        <dbReference type="ChEBI" id="CHEBI:30616"/>
        <dbReference type="ChEBI" id="CHEBI:83421"/>
        <dbReference type="ChEBI" id="CHEBI:456216"/>
        <dbReference type="EC" id="2.7.11.1"/>
    </reaction>
</comment>
<comment type="catalytic activity">
    <reaction evidence="1">
        <text>L-threonyl-[protein] + ATP = O-phospho-L-threonyl-[protein] + ADP + H(+)</text>
        <dbReference type="Rhea" id="RHEA:46608"/>
        <dbReference type="Rhea" id="RHEA-COMP:11060"/>
        <dbReference type="Rhea" id="RHEA-COMP:11605"/>
        <dbReference type="ChEBI" id="CHEBI:15378"/>
        <dbReference type="ChEBI" id="CHEBI:30013"/>
        <dbReference type="ChEBI" id="CHEBI:30616"/>
        <dbReference type="ChEBI" id="CHEBI:61977"/>
        <dbReference type="ChEBI" id="CHEBI:456216"/>
        <dbReference type="EC" id="2.7.11.1"/>
    </reaction>
</comment>
<comment type="subunit">
    <text evidence="4">Interacts with actl-1.</text>
</comment>
<comment type="interaction">
    <interactant intactId="EBI-324661">
        <id>G5ECP4</id>
    </interactant>
    <interactant intactId="EBI-324674">
        <id>Q18008</id>
        <label>actl-1</label>
    </interactant>
    <organismsDiffer>false</organismsDiffer>
    <experiments>3</experiments>
</comment>
<comment type="alternative products">
    <event type="alternative splicing"/>
    <isoform>
        <id>G5ECP4-1</id>
        <name evidence="7">a</name>
        <sequence type="displayed"/>
    </isoform>
    <isoform>
        <id>G5ECP4-2</id>
        <name evidence="8">b</name>
        <sequence type="described" ref="VSP_059828"/>
    </isoform>
</comment>
<comment type="tissue specificity">
    <text evidence="4">Expressed in the nervous system.</text>
</comment>
<comment type="similarity">
    <text evidence="5">Belongs to the protein kinase superfamily. TKL Ser/Thr protein kinase family. Pelle subfamily.</text>
</comment>
<gene>
    <name evidence="7" type="primary">pik-1</name>
    <name evidence="7" type="ORF">K09B11.1</name>
</gene>
<evidence type="ECO:0000250" key="1">
    <source>
        <dbReference type="UniProtKB" id="Q05652"/>
    </source>
</evidence>
<evidence type="ECO:0000255" key="2">
    <source>
        <dbReference type="PROSITE-ProRule" id="PRU00159"/>
    </source>
</evidence>
<evidence type="ECO:0000256" key="3">
    <source>
        <dbReference type="SAM" id="MobiDB-lite"/>
    </source>
</evidence>
<evidence type="ECO:0000269" key="4">
    <source>
    </source>
</evidence>
<evidence type="ECO:0000305" key="5"/>
<evidence type="ECO:0000312" key="6">
    <source>
        <dbReference type="Proteomes" id="UP000001940"/>
    </source>
</evidence>
<evidence type="ECO:0000312" key="7">
    <source>
        <dbReference type="WormBase" id="K09B11.1a"/>
    </source>
</evidence>
<evidence type="ECO:0000312" key="8">
    <source>
        <dbReference type="WormBase" id="K09B11.1b"/>
    </source>
</evidence>